<organism>
    <name type="scientific">Caenorhabditis elegans</name>
    <dbReference type="NCBI Taxonomy" id="6239"/>
    <lineage>
        <taxon>Eukaryota</taxon>
        <taxon>Metazoa</taxon>
        <taxon>Ecdysozoa</taxon>
        <taxon>Nematoda</taxon>
        <taxon>Chromadorea</taxon>
        <taxon>Rhabditida</taxon>
        <taxon>Rhabditina</taxon>
        <taxon>Rhabditomorpha</taxon>
        <taxon>Rhabditoidea</taxon>
        <taxon>Rhabditidae</taxon>
        <taxon>Peloderinae</taxon>
        <taxon>Caenorhabditis</taxon>
    </lineage>
</organism>
<name>SRG30_CAEEL</name>
<dbReference type="EMBL" id="FO081630">
    <property type="protein sequence ID" value="CCD72938.1"/>
    <property type="molecule type" value="Genomic_DNA"/>
</dbReference>
<dbReference type="PIR" id="T32998">
    <property type="entry name" value="T32998"/>
</dbReference>
<dbReference type="RefSeq" id="NP_504702.3">
    <property type="nucleotide sequence ID" value="NM_072301.3"/>
</dbReference>
<dbReference type="SMR" id="O45150"/>
<dbReference type="PaxDb" id="6239-W02F12.7"/>
<dbReference type="EnsemblMetazoa" id="W02F12.7.1">
    <property type="protein sequence ID" value="W02F12.7.1"/>
    <property type="gene ID" value="WBGene00005187"/>
</dbReference>
<dbReference type="GeneID" id="189125"/>
<dbReference type="KEGG" id="cel:CELE_W02F12.7"/>
<dbReference type="UCSC" id="W02F12.7">
    <property type="organism name" value="c. elegans"/>
</dbReference>
<dbReference type="AGR" id="WB:WBGene00005187"/>
<dbReference type="CTD" id="189125"/>
<dbReference type="WormBase" id="W02F12.7">
    <property type="protein sequence ID" value="CE38112"/>
    <property type="gene ID" value="WBGene00005187"/>
    <property type="gene designation" value="srg-30"/>
</dbReference>
<dbReference type="eggNOG" id="ENOG502TGGH">
    <property type="taxonomic scope" value="Eukaryota"/>
</dbReference>
<dbReference type="GeneTree" id="ENSGT00970000195841"/>
<dbReference type="HOGENOM" id="CLU_061253_1_0_1"/>
<dbReference type="InParanoid" id="O45150"/>
<dbReference type="OMA" id="PVIMLCL"/>
<dbReference type="OrthoDB" id="5821484at2759"/>
<dbReference type="PhylomeDB" id="O45150"/>
<dbReference type="PRO" id="PR:O45150"/>
<dbReference type="Proteomes" id="UP000001940">
    <property type="component" value="Chromosome V"/>
</dbReference>
<dbReference type="GO" id="GO:0016020">
    <property type="term" value="C:membrane"/>
    <property type="evidence" value="ECO:0007669"/>
    <property type="project" value="UniProtKB-SubCell"/>
</dbReference>
<dbReference type="GO" id="GO:0004888">
    <property type="term" value="F:transmembrane signaling receptor activity"/>
    <property type="evidence" value="ECO:0007669"/>
    <property type="project" value="InterPro"/>
</dbReference>
<dbReference type="GO" id="GO:0007606">
    <property type="term" value="P:sensory perception of chemical stimulus"/>
    <property type="evidence" value="ECO:0007669"/>
    <property type="project" value="InterPro"/>
</dbReference>
<dbReference type="InterPro" id="IPR000609">
    <property type="entry name" value="7TM_GPCR_serpentine_rcpt_Srg"/>
</dbReference>
<dbReference type="InterPro" id="IPR051119">
    <property type="entry name" value="Nematode_SR-like"/>
</dbReference>
<dbReference type="PANTHER" id="PTHR31627:SF2">
    <property type="entry name" value="SERPENTINE RECEPTOR CLASS GAMMA-30"/>
    <property type="match status" value="1"/>
</dbReference>
<dbReference type="PANTHER" id="PTHR31627">
    <property type="entry name" value="SERPENTINE RECEPTOR CLASS GAMMA-RELATED"/>
    <property type="match status" value="1"/>
</dbReference>
<dbReference type="Pfam" id="PF02118">
    <property type="entry name" value="Srg"/>
    <property type="match status" value="1"/>
</dbReference>
<dbReference type="PRINTS" id="PR00698">
    <property type="entry name" value="TMPROTEINSRG"/>
</dbReference>
<reference key="1">
    <citation type="journal article" date="1998" name="Science">
        <title>Genome sequence of the nematode C. elegans: a platform for investigating biology.</title>
        <authorList>
            <consortium name="The C. elegans sequencing consortium"/>
        </authorList>
    </citation>
    <scope>NUCLEOTIDE SEQUENCE [LARGE SCALE GENOMIC DNA]</scope>
    <source>
        <strain>Bristol N2</strain>
    </source>
</reference>
<keyword id="KW-0472">Membrane</keyword>
<keyword id="KW-1185">Reference proteome</keyword>
<keyword id="KW-0812">Transmembrane</keyword>
<keyword id="KW-1133">Transmembrane helix</keyword>
<gene>
    <name type="primary">srg-30</name>
    <name type="ORF">W02F12.7</name>
</gene>
<sequence>MLKCHPGFNTKLELLKYGIQFVYFIVGLGFHFAVIKVLHKKWSVYSKYPFLKLYYVDSILSVLIILLDLVLIRVFNYIPPLCQWVLQEFPEPSQLISILFIEQYLQFVKSLIFCFMVVNRANNVICVKSFGTIQSCIIPHVIVFCILCPLLGVWTAFLSDSRFVPFQGGFIHETMMEYHWITVSQFSVIISSITIVTVCICSVISMLCISRTHAENKHTEQSLTASALAMSIFYVFALSMNIYCQKAHASSLEMLEFWKALTAFAFDIILVCPPVIMLCLNVRLRINVFSVDTRPTSPK</sequence>
<proteinExistence type="inferred from homology"/>
<comment type="subcellular location">
    <subcellularLocation>
        <location evidence="2">Membrane</location>
        <topology evidence="2">Multi-pass membrane protein</topology>
    </subcellularLocation>
</comment>
<comment type="similarity">
    <text evidence="2">Belongs to the nematode receptor-like protein srg family.</text>
</comment>
<accession>O45150</accession>
<evidence type="ECO:0000255" key="1"/>
<evidence type="ECO:0000305" key="2"/>
<protein>
    <recommendedName>
        <fullName>Serpentine receptor class gamma-30</fullName>
        <shortName>Protein srg-30</shortName>
    </recommendedName>
</protein>
<feature type="chain" id="PRO_0000104568" description="Serpentine receptor class gamma-30">
    <location>
        <begin position="1"/>
        <end position="299"/>
    </location>
</feature>
<feature type="transmembrane region" description="Helical" evidence="1">
    <location>
        <begin position="18"/>
        <end position="38"/>
    </location>
</feature>
<feature type="transmembrane region" description="Helical" evidence="1">
    <location>
        <begin position="59"/>
        <end position="79"/>
    </location>
</feature>
<feature type="transmembrane region" description="Helical" evidence="1">
    <location>
        <begin position="98"/>
        <end position="118"/>
    </location>
</feature>
<feature type="transmembrane region" description="Helical" evidence="1">
    <location>
        <begin position="137"/>
        <end position="157"/>
    </location>
</feature>
<feature type="transmembrane region" description="Helical" evidence="1">
    <location>
        <begin position="189"/>
        <end position="209"/>
    </location>
</feature>
<feature type="transmembrane region" description="Helical" evidence="1">
    <location>
        <begin position="223"/>
        <end position="243"/>
    </location>
</feature>
<feature type="transmembrane region" description="Helical" evidence="1">
    <location>
        <begin position="260"/>
        <end position="280"/>
    </location>
</feature>